<proteinExistence type="inferred from homology"/>
<protein>
    <recommendedName>
        <fullName evidence="5">Insulin-like peptide 1</fullName>
        <shortName>dILP1</shortName>
    </recommendedName>
    <alternativeName>
        <fullName>Insulin-related peptide 1</fullName>
    </alternativeName>
    <component>
        <recommendedName>
            <fullName>Insulin-like peptide 1 A chain</fullName>
        </recommendedName>
    </component>
    <component>
        <recommendedName>
            <fullName>Insulin-like peptide 1 B chain</fullName>
        </recommendedName>
    </component>
</protein>
<accession>Q9VT50</accession>
<gene>
    <name evidence="5" type="primary">Ilp1</name>
    <name evidence="5" type="ORF">CG14173</name>
</gene>
<feature type="signal peptide" evidence="2">
    <location>
        <begin position="1"/>
        <end position="29"/>
    </location>
</feature>
<feature type="chain" id="PRO_0000016185" description="Insulin-like peptide 1">
    <location>
        <begin position="30"/>
        <end position="154"/>
    </location>
</feature>
<feature type="peptide" id="PRO_0000016186" description="Insulin-like peptide 1 B chain" evidence="2">
    <location>
        <begin position="30"/>
        <end position="69"/>
    </location>
</feature>
<feature type="propeptide" id="PRO_0000016187" description="Connecting peptide" evidence="2">
    <location>
        <begin position="73"/>
        <end position="122"/>
    </location>
</feature>
<feature type="peptide" id="PRO_0000016188" description="Insulin-like peptide 1 A chain" evidence="2">
    <location>
        <begin position="125"/>
        <end position="154"/>
    </location>
</feature>
<feature type="region of interest" description="Disordered" evidence="3">
    <location>
        <begin position="72"/>
        <end position="92"/>
    </location>
</feature>
<feature type="compositionally biased region" description="Acidic residues" evidence="3">
    <location>
        <begin position="79"/>
        <end position="91"/>
    </location>
</feature>
<feature type="disulfide bond" description="Interchain (between B and A chains)" evidence="1">
    <location>
        <begin position="49"/>
        <end position="138"/>
    </location>
</feature>
<feature type="disulfide bond" description="Interchain (between B and A chains)" evidence="1">
    <location>
        <begin position="61"/>
        <end position="151"/>
    </location>
</feature>
<feature type="disulfide bond" evidence="1">
    <location>
        <begin position="137"/>
        <end position="142"/>
    </location>
</feature>
<sequence>MFSQHNGAAVHGLRLQSLLIAAMLTAAMAMVTPTGSGHQLLPPGNHKLCGPALSDAMDVVCPHGFNTLPRKRESLLGNSDDDEDTEQEVQDDSSMWQTLDGAGYSFSPLLTNLYGSEVLIKMRRHRRHLTGGVYDECCVKTCSYLELAIYCLPK</sequence>
<name>INSL1_DROME</name>
<keyword id="KW-0165">Cleavage on pair of basic residues</keyword>
<keyword id="KW-1015">Disulfide bond</keyword>
<keyword id="KW-1185">Reference proteome</keyword>
<keyword id="KW-0964">Secreted</keyword>
<keyword id="KW-0732">Signal</keyword>
<organism evidence="6">
    <name type="scientific">Drosophila melanogaster</name>
    <name type="common">Fruit fly</name>
    <dbReference type="NCBI Taxonomy" id="7227"/>
    <lineage>
        <taxon>Eukaryota</taxon>
        <taxon>Metazoa</taxon>
        <taxon>Ecdysozoa</taxon>
        <taxon>Arthropoda</taxon>
        <taxon>Hexapoda</taxon>
        <taxon>Insecta</taxon>
        <taxon>Pterygota</taxon>
        <taxon>Neoptera</taxon>
        <taxon>Endopterygota</taxon>
        <taxon>Diptera</taxon>
        <taxon>Brachycera</taxon>
        <taxon>Muscomorpha</taxon>
        <taxon>Ephydroidea</taxon>
        <taxon>Drosophilidae</taxon>
        <taxon>Drosophila</taxon>
        <taxon>Sophophora</taxon>
    </lineage>
</organism>
<evidence type="ECO:0000250" key="1"/>
<evidence type="ECO:0000255" key="2"/>
<evidence type="ECO:0000256" key="3">
    <source>
        <dbReference type="SAM" id="MobiDB-lite"/>
    </source>
</evidence>
<evidence type="ECO:0000305" key="4"/>
<evidence type="ECO:0000312" key="5">
    <source>
        <dbReference type="FlyBase" id="FBgn0044051"/>
    </source>
</evidence>
<evidence type="ECO:0000312" key="6">
    <source>
        <dbReference type="Proteomes" id="UP000000803"/>
    </source>
</evidence>
<reference key="1">
    <citation type="journal article" date="2000" name="Science">
        <title>The genome sequence of Drosophila melanogaster.</title>
        <authorList>
            <person name="Adams M.D."/>
            <person name="Celniker S.E."/>
            <person name="Holt R.A."/>
            <person name="Evans C.A."/>
            <person name="Gocayne J.D."/>
            <person name="Amanatides P.G."/>
            <person name="Scherer S.E."/>
            <person name="Li P.W."/>
            <person name="Hoskins R.A."/>
            <person name="Galle R.F."/>
            <person name="George R.A."/>
            <person name="Lewis S.E."/>
            <person name="Richards S."/>
            <person name="Ashburner M."/>
            <person name="Henderson S.N."/>
            <person name="Sutton G.G."/>
            <person name="Wortman J.R."/>
            <person name="Yandell M.D."/>
            <person name="Zhang Q."/>
            <person name="Chen L.X."/>
            <person name="Brandon R.C."/>
            <person name="Rogers Y.-H.C."/>
            <person name="Blazej R.G."/>
            <person name="Champe M."/>
            <person name="Pfeiffer B.D."/>
            <person name="Wan K.H."/>
            <person name="Doyle C."/>
            <person name="Baxter E.G."/>
            <person name="Helt G."/>
            <person name="Nelson C.R."/>
            <person name="Miklos G.L.G."/>
            <person name="Abril J.F."/>
            <person name="Agbayani A."/>
            <person name="An H.-J."/>
            <person name="Andrews-Pfannkoch C."/>
            <person name="Baldwin D."/>
            <person name="Ballew R.M."/>
            <person name="Basu A."/>
            <person name="Baxendale J."/>
            <person name="Bayraktaroglu L."/>
            <person name="Beasley E.M."/>
            <person name="Beeson K.Y."/>
            <person name="Benos P.V."/>
            <person name="Berman B.P."/>
            <person name="Bhandari D."/>
            <person name="Bolshakov S."/>
            <person name="Borkova D."/>
            <person name="Botchan M.R."/>
            <person name="Bouck J."/>
            <person name="Brokstein P."/>
            <person name="Brottier P."/>
            <person name="Burtis K.C."/>
            <person name="Busam D.A."/>
            <person name="Butler H."/>
            <person name="Cadieu E."/>
            <person name="Center A."/>
            <person name="Chandra I."/>
            <person name="Cherry J.M."/>
            <person name="Cawley S."/>
            <person name="Dahlke C."/>
            <person name="Davenport L.B."/>
            <person name="Davies P."/>
            <person name="de Pablos B."/>
            <person name="Delcher A."/>
            <person name="Deng Z."/>
            <person name="Mays A.D."/>
            <person name="Dew I."/>
            <person name="Dietz S.M."/>
            <person name="Dodson K."/>
            <person name="Doup L.E."/>
            <person name="Downes M."/>
            <person name="Dugan-Rocha S."/>
            <person name="Dunkov B.C."/>
            <person name="Dunn P."/>
            <person name="Durbin K.J."/>
            <person name="Evangelista C.C."/>
            <person name="Ferraz C."/>
            <person name="Ferriera S."/>
            <person name="Fleischmann W."/>
            <person name="Fosler C."/>
            <person name="Gabrielian A.E."/>
            <person name="Garg N.S."/>
            <person name="Gelbart W.M."/>
            <person name="Glasser K."/>
            <person name="Glodek A."/>
            <person name="Gong F."/>
            <person name="Gorrell J.H."/>
            <person name="Gu Z."/>
            <person name="Guan P."/>
            <person name="Harris M."/>
            <person name="Harris N.L."/>
            <person name="Harvey D.A."/>
            <person name="Heiman T.J."/>
            <person name="Hernandez J.R."/>
            <person name="Houck J."/>
            <person name="Hostin D."/>
            <person name="Houston K.A."/>
            <person name="Howland T.J."/>
            <person name="Wei M.-H."/>
            <person name="Ibegwam C."/>
            <person name="Jalali M."/>
            <person name="Kalush F."/>
            <person name="Karpen G.H."/>
            <person name="Ke Z."/>
            <person name="Kennison J.A."/>
            <person name="Ketchum K.A."/>
            <person name="Kimmel B.E."/>
            <person name="Kodira C.D."/>
            <person name="Kraft C.L."/>
            <person name="Kravitz S."/>
            <person name="Kulp D."/>
            <person name="Lai Z."/>
            <person name="Lasko P."/>
            <person name="Lei Y."/>
            <person name="Levitsky A.A."/>
            <person name="Li J.H."/>
            <person name="Li Z."/>
            <person name="Liang Y."/>
            <person name="Lin X."/>
            <person name="Liu X."/>
            <person name="Mattei B."/>
            <person name="McIntosh T.C."/>
            <person name="McLeod M.P."/>
            <person name="McPherson D."/>
            <person name="Merkulov G."/>
            <person name="Milshina N.V."/>
            <person name="Mobarry C."/>
            <person name="Morris J."/>
            <person name="Moshrefi A."/>
            <person name="Mount S.M."/>
            <person name="Moy M."/>
            <person name="Murphy B."/>
            <person name="Murphy L."/>
            <person name="Muzny D.M."/>
            <person name="Nelson D.L."/>
            <person name="Nelson D.R."/>
            <person name="Nelson K.A."/>
            <person name="Nixon K."/>
            <person name="Nusskern D.R."/>
            <person name="Pacleb J.M."/>
            <person name="Palazzolo M."/>
            <person name="Pittman G.S."/>
            <person name="Pan S."/>
            <person name="Pollard J."/>
            <person name="Puri V."/>
            <person name="Reese M.G."/>
            <person name="Reinert K."/>
            <person name="Remington K."/>
            <person name="Saunders R.D.C."/>
            <person name="Scheeler F."/>
            <person name="Shen H."/>
            <person name="Shue B.C."/>
            <person name="Siden-Kiamos I."/>
            <person name="Simpson M."/>
            <person name="Skupski M.P."/>
            <person name="Smith T.J."/>
            <person name="Spier E."/>
            <person name="Spradling A.C."/>
            <person name="Stapleton M."/>
            <person name="Strong R."/>
            <person name="Sun E."/>
            <person name="Svirskas R."/>
            <person name="Tector C."/>
            <person name="Turner R."/>
            <person name="Venter E."/>
            <person name="Wang A.H."/>
            <person name="Wang X."/>
            <person name="Wang Z.-Y."/>
            <person name="Wassarman D.A."/>
            <person name="Weinstock G.M."/>
            <person name="Weissenbach J."/>
            <person name="Williams S.M."/>
            <person name="Woodage T."/>
            <person name="Worley K.C."/>
            <person name="Wu D."/>
            <person name="Yang S."/>
            <person name="Yao Q.A."/>
            <person name="Ye J."/>
            <person name="Yeh R.-F."/>
            <person name="Zaveri J.S."/>
            <person name="Zhan M."/>
            <person name="Zhang G."/>
            <person name="Zhao Q."/>
            <person name="Zheng L."/>
            <person name="Zheng X.H."/>
            <person name="Zhong F.N."/>
            <person name="Zhong W."/>
            <person name="Zhou X."/>
            <person name="Zhu S.C."/>
            <person name="Zhu X."/>
            <person name="Smith H.O."/>
            <person name="Gibbs R.A."/>
            <person name="Myers E.W."/>
            <person name="Rubin G.M."/>
            <person name="Venter J.C."/>
        </authorList>
    </citation>
    <scope>NUCLEOTIDE SEQUENCE [LARGE SCALE GENOMIC DNA]</scope>
    <source>
        <strain>Berkeley</strain>
    </source>
</reference>
<reference key="2">
    <citation type="journal article" date="2002" name="Genome Biol.">
        <title>Annotation of the Drosophila melanogaster euchromatic genome: a systematic review.</title>
        <authorList>
            <person name="Misra S."/>
            <person name="Crosby M.A."/>
            <person name="Mungall C.J."/>
            <person name="Matthews B.B."/>
            <person name="Campbell K.S."/>
            <person name="Hradecky P."/>
            <person name="Huang Y."/>
            <person name="Kaminker J.S."/>
            <person name="Millburn G.H."/>
            <person name="Prochnik S.E."/>
            <person name="Smith C.D."/>
            <person name="Tupy J.L."/>
            <person name="Whitfield E.J."/>
            <person name="Bayraktaroglu L."/>
            <person name="Berman B.P."/>
            <person name="Bettencourt B.R."/>
            <person name="Celniker S.E."/>
            <person name="de Grey A.D.N.J."/>
            <person name="Drysdale R.A."/>
            <person name="Harris N.L."/>
            <person name="Richter J."/>
            <person name="Russo S."/>
            <person name="Schroeder A.J."/>
            <person name="Shu S.Q."/>
            <person name="Stapleton M."/>
            <person name="Yamada C."/>
            <person name="Ashburner M."/>
            <person name="Gelbart W.M."/>
            <person name="Rubin G.M."/>
            <person name="Lewis S.E."/>
        </authorList>
    </citation>
    <scope>GENOME REANNOTATION</scope>
    <source>
        <strain>Berkeley</strain>
    </source>
</reference>
<reference key="3">
    <citation type="journal article" date="2001" name="Curr. Biol.">
        <title>An evolutionarily conserved function of the Drosophila insulin receptor and insulin-like peptides in growth control.</title>
        <authorList>
            <person name="Brogiolo W."/>
            <person name="Stocker H."/>
            <person name="Ikeya T."/>
            <person name="Rintelen F."/>
            <person name="Fernandez R."/>
            <person name="Hafen E."/>
        </authorList>
    </citation>
    <scope>IDENTIFICATION</scope>
</reference>
<dbReference type="EMBL" id="AE014296">
    <property type="protein sequence ID" value="AAF50205.1"/>
    <property type="molecule type" value="Genomic_DNA"/>
</dbReference>
<dbReference type="RefSeq" id="NP_648359.1">
    <property type="nucleotide sequence ID" value="NM_140102.2"/>
</dbReference>
<dbReference type="BioGRID" id="64537">
    <property type="interactions" value="2"/>
</dbReference>
<dbReference type="FunCoup" id="Q9VT50">
    <property type="interactions" value="239"/>
</dbReference>
<dbReference type="STRING" id="7227.FBpp0076057"/>
<dbReference type="PaxDb" id="7227-FBpp0076057"/>
<dbReference type="DNASU" id="39149"/>
<dbReference type="EnsemblMetazoa" id="FBtr0076328">
    <property type="protein sequence ID" value="FBpp0076057"/>
    <property type="gene ID" value="FBgn0044051"/>
</dbReference>
<dbReference type="GeneID" id="39149"/>
<dbReference type="KEGG" id="dme:Dmel_CG14173"/>
<dbReference type="AGR" id="FB:FBgn0044051"/>
<dbReference type="CTD" id="39149"/>
<dbReference type="FlyBase" id="FBgn0044051">
    <property type="gene designation" value="Ilp1"/>
</dbReference>
<dbReference type="VEuPathDB" id="VectorBase:FBgn0044051"/>
<dbReference type="eggNOG" id="ENOG502S3FQ">
    <property type="taxonomic scope" value="Eukaryota"/>
</dbReference>
<dbReference type="HOGENOM" id="CLU_1706141_0_0_1"/>
<dbReference type="InParanoid" id="Q9VT50"/>
<dbReference type="OMA" id="VYDECCV"/>
<dbReference type="OrthoDB" id="10019596at2759"/>
<dbReference type="PhylomeDB" id="Q9VT50"/>
<dbReference type="Reactome" id="R-DME-110478">
    <property type="pathway name" value="Insulin signaling pathway"/>
</dbReference>
<dbReference type="SignaLink" id="Q9VT50"/>
<dbReference type="BioGRID-ORCS" id="39149">
    <property type="hits" value="0 hits in 1 CRISPR screen"/>
</dbReference>
<dbReference type="GenomeRNAi" id="39149"/>
<dbReference type="PRO" id="PR:Q9VT50"/>
<dbReference type="Proteomes" id="UP000000803">
    <property type="component" value="Chromosome 3L"/>
</dbReference>
<dbReference type="Bgee" id="FBgn0044051">
    <property type="expression patterns" value="Expressed in central nervous system and 3 other cell types or tissues"/>
</dbReference>
<dbReference type="ExpressionAtlas" id="Q9VT50">
    <property type="expression patterns" value="baseline and differential"/>
</dbReference>
<dbReference type="GO" id="GO:0005576">
    <property type="term" value="C:extracellular region"/>
    <property type="evidence" value="ECO:0000304"/>
    <property type="project" value="Reactome"/>
</dbReference>
<dbReference type="GO" id="GO:0005615">
    <property type="term" value="C:extracellular space"/>
    <property type="evidence" value="ECO:0000250"/>
    <property type="project" value="FlyBase"/>
</dbReference>
<dbReference type="GO" id="GO:0005179">
    <property type="term" value="F:hormone activity"/>
    <property type="evidence" value="ECO:0007669"/>
    <property type="project" value="InterPro"/>
</dbReference>
<dbReference type="GO" id="GO:0005158">
    <property type="term" value="F:insulin receptor binding"/>
    <property type="evidence" value="ECO:0000250"/>
    <property type="project" value="UniProtKB"/>
</dbReference>
<dbReference type="GO" id="GO:0008286">
    <property type="term" value="P:insulin receptor signaling pathway"/>
    <property type="evidence" value="ECO:0000250"/>
    <property type="project" value="UniProtKB"/>
</dbReference>
<dbReference type="CDD" id="cd04366">
    <property type="entry name" value="IlGF_insulin_bombyxin_like"/>
    <property type="match status" value="1"/>
</dbReference>
<dbReference type="Gene3D" id="1.10.100.10">
    <property type="entry name" value="Insulin-like"/>
    <property type="match status" value="1"/>
</dbReference>
<dbReference type="InterPro" id="IPR016179">
    <property type="entry name" value="Insulin-like"/>
</dbReference>
<dbReference type="InterPro" id="IPR036438">
    <property type="entry name" value="Insulin-like_sf"/>
</dbReference>
<dbReference type="InterPro" id="IPR022353">
    <property type="entry name" value="Insulin_CS"/>
</dbReference>
<dbReference type="InterPro" id="IPR022352">
    <property type="entry name" value="Insulin_family"/>
</dbReference>
<dbReference type="PANTHER" id="PTHR13647:SF4">
    <property type="entry name" value="INSULIN-LIKE PEPTIDE 1-RELATED"/>
    <property type="match status" value="1"/>
</dbReference>
<dbReference type="PANTHER" id="PTHR13647">
    <property type="entry name" value="INSULIN-LIKE PEPTIDE 2-RELATED"/>
    <property type="match status" value="1"/>
</dbReference>
<dbReference type="Pfam" id="PF00049">
    <property type="entry name" value="Insulin"/>
    <property type="match status" value="1"/>
</dbReference>
<dbReference type="PRINTS" id="PR00276">
    <property type="entry name" value="INSULINFAMLY"/>
</dbReference>
<dbReference type="SMART" id="SM00078">
    <property type="entry name" value="IlGF"/>
    <property type="match status" value="1"/>
</dbReference>
<dbReference type="SUPFAM" id="SSF56994">
    <property type="entry name" value="Insulin-like"/>
    <property type="match status" value="1"/>
</dbReference>
<dbReference type="PROSITE" id="PS00262">
    <property type="entry name" value="INSULIN"/>
    <property type="match status" value="1"/>
</dbReference>
<comment type="function">
    <text evidence="4">Possible ligand of InR/insulin-like receptor.</text>
</comment>
<comment type="subunit">
    <text evidence="1">Heterodimer of a B chain and an A chain linked by two disulfide bonds.</text>
</comment>
<comment type="subcellular location">
    <subcellularLocation>
        <location evidence="4">Secreted</location>
    </subcellularLocation>
</comment>
<comment type="similarity">
    <text evidence="4">Belongs to the insulin family.</text>
</comment>